<gene>
    <name evidence="1" type="primary">hldD</name>
    <name type="ordered locus">Noc_2614</name>
</gene>
<protein>
    <recommendedName>
        <fullName evidence="1">ADP-L-glycero-D-manno-heptose-6-epimerase</fullName>
        <ecNumber evidence="1">5.1.3.20</ecNumber>
    </recommendedName>
    <alternativeName>
        <fullName evidence="1">ADP-L-glycero-beta-D-manno-heptose-6-epimerase</fullName>
        <shortName evidence="1">ADP-glyceromanno-heptose 6-epimerase</shortName>
        <shortName evidence="1">ADP-hep 6-epimerase</shortName>
        <shortName evidence="1">AGME</shortName>
    </alternativeName>
</protein>
<organism>
    <name type="scientific">Nitrosococcus oceani (strain ATCC 19707 / BCRC 17464 / JCM 30415 / NCIMB 11848 / C-107)</name>
    <dbReference type="NCBI Taxonomy" id="323261"/>
    <lineage>
        <taxon>Bacteria</taxon>
        <taxon>Pseudomonadati</taxon>
        <taxon>Pseudomonadota</taxon>
        <taxon>Gammaproteobacteria</taxon>
        <taxon>Chromatiales</taxon>
        <taxon>Chromatiaceae</taxon>
        <taxon>Nitrosococcus</taxon>
    </lineage>
</organism>
<dbReference type="EC" id="5.1.3.20" evidence="1"/>
<dbReference type="EMBL" id="CP000127">
    <property type="protein sequence ID" value="ABA59067.1"/>
    <property type="molecule type" value="Genomic_DNA"/>
</dbReference>
<dbReference type="SMR" id="Q3J7X9"/>
<dbReference type="FunCoup" id="Q3J7X9">
    <property type="interactions" value="269"/>
</dbReference>
<dbReference type="STRING" id="323261.Noc_2614"/>
<dbReference type="KEGG" id="noc:Noc_2614"/>
<dbReference type="eggNOG" id="COG0451">
    <property type="taxonomic scope" value="Bacteria"/>
</dbReference>
<dbReference type="HOGENOM" id="CLU_007383_1_3_6"/>
<dbReference type="InParanoid" id="Q3J7X9"/>
<dbReference type="UniPathway" id="UPA00356">
    <property type="reaction ID" value="UER00440"/>
</dbReference>
<dbReference type="Proteomes" id="UP000006838">
    <property type="component" value="Chromosome"/>
</dbReference>
<dbReference type="GO" id="GO:0008712">
    <property type="term" value="F:ADP-glyceromanno-heptose 6-epimerase activity"/>
    <property type="evidence" value="ECO:0007669"/>
    <property type="project" value="UniProtKB-UniRule"/>
</dbReference>
<dbReference type="GO" id="GO:0050661">
    <property type="term" value="F:NADP binding"/>
    <property type="evidence" value="ECO:0007669"/>
    <property type="project" value="InterPro"/>
</dbReference>
<dbReference type="GO" id="GO:0097171">
    <property type="term" value="P:ADP-L-glycero-beta-D-manno-heptose biosynthetic process"/>
    <property type="evidence" value="ECO:0007669"/>
    <property type="project" value="UniProtKB-UniPathway"/>
</dbReference>
<dbReference type="GO" id="GO:0005975">
    <property type="term" value="P:carbohydrate metabolic process"/>
    <property type="evidence" value="ECO:0007669"/>
    <property type="project" value="UniProtKB-UniRule"/>
</dbReference>
<dbReference type="CDD" id="cd05248">
    <property type="entry name" value="ADP_GME_SDR_e"/>
    <property type="match status" value="1"/>
</dbReference>
<dbReference type="Gene3D" id="3.40.50.720">
    <property type="entry name" value="NAD(P)-binding Rossmann-like Domain"/>
    <property type="match status" value="1"/>
</dbReference>
<dbReference type="Gene3D" id="3.90.25.10">
    <property type="entry name" value="UDP-galactose 4-epimerase, domain 1"/>
    <property type="match status" value="1"/>
</dbReference>
<dbReference type="HAMAP" id="MF_01601">
    <property type="entry name" value="Heptose_epimerase"/>
    <property type="match status" value="1"/>
</dbReference>
<dbReference type="InterPro" id="IPR001509">
    <property type="entry name" value="Epimerase_deHydtase"/>
</dbReference>
<dbReference type="InterPro" id="IPR011912">
    <property type="entry name" value="Heptose_epim"/>
</dbReference>
<dbReference type="InterPro" id="IPR036291">
    <property type="entry name" value="NAD(P)-bd_dom_sf"/>
</dbReference>
<dbReference type="NCBIfam" id="TIGR02197">
    <property type="entry name" value="heptose_epim"/>
    <property type="match status" value="1"/>
</dbReference>
<dbReference type="NCBIfam" id="NF008360">
    <property type="entry name" value="PRK11150.1"/>
    <property type="match status" value="1"/>
</dbReference>
<dbReference type="PANTHER" id="PTHR43103:SF3">
    <property type="entry name" value="ADP-L-GLYCERO-D-MANNO-HEPTOSE-6-EPIMERASE"/>
    <property type="match status" value="1"/>
</dbReference>
<dbReference type="PANTHER" id="PTHR43103">
    <property type="entry name" value="NUCLEOSIDE-DIPHOSPHATE-SUGAR EPIMERASE"/>
    <property type="match status" value="1"/>
</dbReference>
<dbReference type="Pfam" id="PF01370">
    <property type="entry name" value="Epimerase"/>
    <property type="match status" value="1"/>
</dbReference>
<dbReference type="SUPFAM" id="SSF51735">
    <property type="entry name" value="NAD(P)-binding Rossmann-fold domains"/>
    <property type="match status" value="1"/>
</dbReference>
<reference key="1">
    <citation type="journal article" date="2006" name="Appl. Environ. Microbiol.">
        <title>Complete genome sequence of the marine, chemolithoautotrophic, ammonia-oxidizing bacterium Nitrosococcus oceani ATCC 19707.</title>
        <authorList>
            <person name="Klotz M.G."/>
            <person name="Arp D.J."/>
            <person name="Chain P.S.G."/>
            <person name="El-Sheikh A.F."/>
            <person name="Hauser L.J."/>
            <person name="Hommes N.G."/>
            <person name="Larimer F.W."/>
            <person name="Malfatti S.A."/>
            <person name="Norton J.M."/>
            <person name="Poret-Peterson A.T."/>
            <person name="Vergez L.M."/>
            <person name="Ward B.B."/>
        </authorList>
    </citation>
    <scope>NUCLEOTIDE SEQUENCE [LARGE SCALE GENOMIC DNA]</scope>
    <source>
        <strain>ATCC 19707 / BCRC 17464 / JCM 30415 / NCIMB 11848 / C-107</strain>
    </source>
</reference>
<name>HLDD_NITOC</name>
<keyword id="KW-0119">Carbohydrate metabolism</keyword>
<keyword id="KW-0413">Isomerase</keyword>
<keyword id="KW-0521">NADP</keyword>
<keyword id="KW-1185">Reference proteome</keyword>
<comment type="function">
    <text evidence="1">Catalyzes the interconversion between ADP-D-glycero-beta-D-manno-heptose and ADP-L-glycero-beta-D-manno-heptose via an epimerization at carbon 6 of the heptose.</text>
</comment>
<comment type="catalytic activity">
    <reaction evidence="1">
        <text>ADP-D-glycero-beta-D-manno-heptose = ADP-L-glycero-beta-D-manno-heptose</text>
        <dbReference type="Rhea" id="RHEA:17577"/>
        <dbReference type="ChEBI" id="CHEBI:59967"/>
        <dbReference type="ChEBI" id="CHEBI:61506"/>
        <dbReference type="EC" id="5.1.3.20"/>
    </reaction>
</comment>
<comment type="cofactor">
    <cofactor evidence="1">
        <name>NADP(+)</name>
        <dbReference type="ChEBI" id="CHEBI:58349"/>
    </cofactor>
    <text evidence="1">Binds 1 NADP(+) per subunit.</text>
</comment>
<comment type="pathway">
    <text evidence="1">Nucleotide-sugar biosynthesis; ADP-L-glycero-beta-D-manno-heptose biosynthesis; ADP-L-glycero-beta-D-manno-heptose from D-glycero-beta-D-manno-heptose 7-phosphate: step 4/4.</text>
</comment>
<comment type="subunit">
    <text evidence="1">Homopentamer.</text>
</comment>
<comment type="domain">
    <text evidence="1">Contains a large N-terminal NADP-binding domain, and a smaller C-terminal substrate-binding domain.</text>
</comment>
<comment type="similarity">
    <text evidence="1">Belongs to the NAD(P)-dependent epimerase/dehydratase family. HldD subfamily.</text>
</comment>
<feature type="chain" id="PRO_0000255734" description="ADP-L-glycero-D-manno-heptose-6-epimerase">
    <location>
        <begin position="1"/>
        <end position="317"/>
    </location>
</feature>
<feature type="active site" description="Proton acceptor" evidence="1">
    <location>
        <position position="140"/>
    </location>
</feature>
<feature type="active site" description="Proton acceptor" evidence="1">
    <location>
        <position position="178"/>
    </location>
</feature>
<feature type="binding site" evidence="1">
    <location>
        <begin position="10"/>
        <end position="11"/>
    </location>
    <ligand>
        <name>NADP(+)</name>
        <dbReference type="ChEBI" id="CHEBI:58349"/>
    </ligand>
</feature>
<feature type="binding site" evidence="1">
    <location>
        <begin position="31"/>
        <end position="32"/>
    </location>
    <ligand>
        <name>NADP(+)</name>
        <dbReference type="ChEBI" id="CHEBI:58349"/>
    </ligand>
</feature>
<feature type="binding site" evidence="1">
    <location>
        <position position="38"/>
    </location>
    <ligand>
        <name>NADP(+)</name>
        <dbReference type="ChEBI" id="CHEBI:58349"/>
    </ligand>
</feature>
<feature type="binding site" evidence="1">
    <location>
        <position position="53"/>
    </location>
    <ligand>
        <name>NADP(+)</name>
        <dbReference type="ChEBI" id="CHEBI:58349"/>
    </ligand>
</feature>
<feature type="binding site" evidence="1">
    <location>
        <begin position="76"/>
        <end position="80"/>
    </location>
    <ligand>
        <name>NADP(+)</name>
        <dbReference type="ChEBI" id="CHEBI:58349"/>
    </ligand>
</feature>
<feature type="binding site" evidence="1">
    <location>
        <position position="93"/>
    </location>
    <ligand>
        <name>NADP(+)</name>
        <dbReference type="ChEBI" id="CHEBI:58349"/>
    </ligand>
</feature>
<feature type="binding site" evidence="1">
    <location>
        <position position="144"/>
    </location>
    <ligand>
        <name>NADP(+)</name>
        <dbReference type="ChEBI" id="CHEBI:58349"/>
    </ligand>
</feature>
<feature type="binding site" evidence="1">
    <location>
        <position position="169"/>
    </location>
    <ligand>
        <name>substrate</name>
    </ligand>
</feature>
<feature type="binding site" evidence="1">
    <location>
        <position position="170"/>
    </location>
    <ligand>
        <name>NADP(+)</name>
        <dbReference type="ChEBI" id="CHEBI:58349"/>
    </ligand>
</feature>
<feature type="binding site" evidence="1">
    <location>
        <position position="178"/>
    </location>
    <ligand>
        <name>NADP(+)</name>
        <dbReference type="ChEBI" id="CHEBI:58349"/>
    </ligand>
</feature>
<feature type="binding site" evidence="1">
    <location>
        <position position="180"/>
    </location>
    <ligand>
        <name>substrate</name>
    </ligand>
</feature>
<feature type="binding site" evidence="1">
    <location>
        <position position="187"/>
    </location>
    <ligand>
        <name>substrate</name>
    </ligand>
</feature>
<feature type="binding site" evidence="1">
    <location>
        <begin position="201"/>
        <end position="204"/>
    </location>
    <ligand>
        <name>substrate</name>
    </ligand>
</feature>
<feature type="binding site" evidence="1">
    <location>
        <position position="214"/>
    </location>
    <ligand>
        <name>substrate</name>
    </ligand>
</feature>
<feature type="binding site" evidence="1">
    <location>
        <position position="278"/>
    </location>
    <ligand>
        <name>substrate</name>
    </ligand>
</feature>
<proteinExistence type="inferred from homology"/>
<accession>Q3J7X9</accession>
<evidence type="ECO:0000255" key="1">
    <source>
        <dbReference type="HAMAP-Rule" id="MF_01601"/>
    </source>
</evidence>
<sequence>MIIVTGGAGFIGSNIIKALNQGGREDILVVDDLTQGEKFSNLIDCEIWDYWDKQPFLQAIKAGEEFPHPVDAFIHQGACSATTEWNGRYMMENNFYYSKRLLHYCLERRIPFLYASSAAVYGCGLTFQEHREFEAPRNVYGYSKWLFDQYVRRYLPTASSQIVGLRYFNIYGPREAHKGAMASVAYHAHCQLKETGRIKLFEGCDGYEHGEQRRDFVSVADAAAVNLWFLEHPNQSGIFNVGTGQAQTFNEVAQAVLAFHGHGEIEYIPFPDHLRGRYQSFTQADIHALREAGYAEPFALVEKGVKTYLDWLGKNQD</sequence>